<name>PDXH_HERAR</name>
<accession>A4G883</accession>
<comment type="function">
    <text evidence="1">Catalyzes the oxidation of either pyridoxine 5'-phosphate (PNP) or pyridoxamine 5'-phosphate (PMP) into pyridoxal 5'-phosphate (PLP).</text>
</comment>
<comment type="catalytic activity">
    <reaction evidence="1">
        <text>pyridoxamine 5'-phosphate + O2 + H2O = pyridoxal 5'-phosphate + H2O2 + NH4(+)</text>
        <dbReference type="Rhea" id="RHEA:15817"/>
        <dbReference type="ChEBI" id="CHEBI:15377"/>
        <dbReference type="ChEBI" id="CHEBI:15379"/>
        <dbReference type="ChEBI" id="CHEBI:16240"/>
        <dbReference type="ChEBI" id="CHEBI:28938"/>
        <dbReference type="ChEBI" id="CHEBI:58451"/>
        <dbReference type="ChEBI" id="CHEBI:597326"/>
        <dbReference type="EC" id="1.4.3.5"/>
    </reaction>
</comment>
<comment type="catalytic activity">
    <reaction evidence="1">
        <text>pyridoxine 5'-phosphate + O2 = pyridoxal 5'-phosphate + H2O2</text>
        <dbReference type="Rhea" id="RHEA:15149"/>
        <dbReference type="ChEBI" id="CHEBI:15379"/>
        <dbReference type="ChEBI" id="CHEBI:16240"/>
        <dbReference type="ChEBI" id="CHEBI:58589"/>
        <dbReference type="ChEBI" id="CHEBI:597326"/>
        <dbReference type="EC" id="1.4.3.5"/>
    </reaction>
</comment>
<comment type="cofactor">
    <cofactor evidence="1">
        <name>FMN</name>
        <dbReference type="ChEBI" id="CHEBI:58210"/>
    </cofactor>
    <text evidence="1">Binds 1 FMN per subunit.</text>
</comment>
<comment type="pathway">
    <text evidence="1">Cofactor metabolism; pyridoxal 5'-phosphate salvage; pyridoxal 5'-phosphate from pyridoxamine 5'-phosphate: step 1/1.</text>
</comment>
<comment type="pathway">
    <text evidence="1">Cofactor metabolism; pyridoxal 5'-phosphate salvage; pyridoxal 5'-phosphate from pyridoxine 5'-phosphate: step 1/1.</text>
</comment>
<comment type="subunit">
    <text evidence="1">Homodimer.</text>
</comment>
<comment type="similarity">
    <text evidence="1">Belongs to the pyridoxamine 5'-phosphate oxidase family.</text>
</comment>
<dbReference type="EC" id="1.4.3.5" evidence="1"/>
<dbReference type="EMBL" id="CU207211">
    <property type="protein sequence ID" value="CAL62720.1"/>
    <property type="molecule type" value="Genomic_DNA"/>
</dbReference>
<dbReference type="SMR" id="A4G883"/>
<dbReference type="STRING" id="204773.HEAR2598"/>
<dbReference type="KEGG" id="har:HEAR2598"/>
<dbReference type="eggNOG" id="COG0259">
    <property type="taxonomic scope" value="Bacteria"/>
</dbReference>
<dbReference type="HOGENOM" id="CLU_032263_2_2_4"/>
<dbReference type="OrthoDB" id="9780392at2"/>
<dbReference type="UniPathway" id="UPA01068">
    <property type="reaction ID" value="UER00304"/>
</dbReference>
<dbReference type="UniPathway" id="UPA01068">
    <property type="reaction ID" value="UER00305"/>
</dbReference>
<dbReference type="Proteomes" id="UP000006697">
    <property type="component" value="Chromosome"/>
</dbReference>
<dbReference type="GO" id="GO:0010181">
    <property type="term" value="F:FMN binding"/>
    <property type="evidence" value="ECO:0007669"/>
    <property type="project" value="UniProtKB-UniRule"/>
</dbReference>
<dbReference type="GO" id="GO:0004733">
    <property type="term" value="F:pyridoxamine phosphate oxidase activity"/>
    <property type="evidence" value="ECO:0007669"/>
    <property type="project" value="UniProtKB-UniRule"/>
</dbReference>
<dbReference type="GO" id="GO:0008615">
    <property type="term" value="P:pyridoxine biosynthetic process"/>
    <property type="evidence" value="ECO:0007669"/>
    <property type="project" value="UniProtKB-KW"/>
</dbReference>
<dbReference type="FunFam" id="2.30.110.10:FF:000005">
    <property type="entry name" value="NAD(P)H-hydrate epimerase"/>
    <property type="match status" value="1"/>
</dbReference>
<dbReference type="Gene3D" id="2.30.110.10">
    <property type="entry name" value="Electron Transport, Fmn-binding Protein, Chain A"/>
    <property type="match status" value="1"/>
</dbReference>
<dbReference type="HAMAP" id="MF_01629">
    <property type="entry name" value="PdxH"/>
    <property type="match status" value="1"/>
</dbReference>
<dbReference type="InterPro" id="IPR000659">
    <property type="entry name" value="Pyridox_Oxase"/>
</dbReference>
<dbReference type="InterPro" id="IPR019740">
    <property type="entry name" value="Pyridox_Oxase_CS"/>
</dbReference>
<dbReference type="InterPro" id="IPR011576">
    <property type="entry name" value="Pyridox_Oxase_N"/>
</dbReference>
<dbReference type="InterPro" id="IPR019576">
    <property type="entry name" value="Pyridoxamine_oxidase_dimer_C"/>
</dbReference>
<dbReference type="InterPro" id="IPR012349">
    <property type="entry name" value="Split_barrel_FMN-bd"/>
</dbReference>
<dbReference type="NCBIfam" id="TIGR00558">
    <property type="entry name" value="pdxH"/>
    <property type="match status" value="1"/>
</dbReference>
<dbReference type="NCBIfam" id="NF004231">
    <property type="entry name" value="PRK05679.1"/>
    <property type="match status" value="1"/>
</dbReference>
<dbReference type="PANTHER" id="PTHR10851:SF0">
    <property type="entry name" value="PYRIDOXINE-5'-PHOSPHATE OXIDASE"/>
    <property type="match status" value="1"/>
</dbReference>
<dbReference type="PANTHER" id="PTHR10851">
    <property type="entry name" value="PYRIDOXINE-5-PHOSPHATE OXIDASE"/>
    <property type="match status" value="1"/>
</dbReference>
<dbReference type="Pfam" id="PF10590">
    <property type="entry name" value="PNP_phzG_C"/>
    <property type="match status" value="1"/>
</dbReference>
<dbReference type="Pfam" id="PF01243">
    <property type="entry name" value="PNPOx_N"/>
    <property type="match status" value="1"/>
</dbReference>
<dbReference type="PIRSF" id="PIRSF000190">
    <property type="entry name" value="Pyd_amn-ph_oxd"/>
    <property type="match status" value="1"/>
</dbReference>
<dbReference type="SUPFAM" id="SSF50475">
    <property type="entry name" value="FMN-binding split barrel"/>
    <property type="match status" value="1"/>
</dbReference>
<dbReference type="PROSITE" id="PS01064">
    <property type="entry name" value="PYRIDOX_OXIDASE"/>
    <property type="match status" value="1"/>
</dbReference>
<proteinExistence type="inferred from homology"/>
<protein>
    <recommendedName>
        <fullName evidence="1">Pyridoxine/pyridoxamine 5'-phosphate oxidase</fullName>
        <ecNumber evidence="1">1.4.3.5</ecNumber>
    </recommendedName>
    <alternativeName>
        <fullName evidence="1">PNP/PMP oxidase</fullName>
        <shortName evidence="1">PNPOx</shortName>
    </alternativeName>
    <alternativeName>
        <fullName evidence="1">Pyridoxal 5'-phosphate synthase</fullName>
    </alternativeName>
</protein>
<organism>
    <name type="scientific">Herminiimonas arsenicoxydans</name>
    <dbReference type="NCBI Taxonomy" id="204773"/>
    <lineage>
        <taxon>Bacteria</taxon>
        <taxon>Pseudomonadati</taxon>
        <taxon>Pseudomonadota</taxon>
        <taxon>Betaproteobacteria</taxon>
        <taxon>Burkholderiales</taxon>
        <taxon>Oxalobacteraceae</taxon>
        <taxon>Herminiimonas</taxon>
    </lineage>
</organism>
<reference key="1">
    <citation type="journal article" date="2007" name="PLoS Genet.">
        <title>A tale of two oxidation states: bacterial colonization of arsenic-rich environments.</title>
        <authorList>
            <person name="Muller D."/>
            <person name="Medigue C."/>
            <person name="Koechler S."/>
            <person name="Barbe V."/>
            <person name="Barakat M."/>
            <person name="Talla E."/>
            <person name="Bonnefoy V."/>
            <person name="Krin E."/>
            <person name="Arsene-Ploetze F."/>
            <person name="Carapito C."/>
            <person name="Chandler M."/>
            <person name="Cournoyer B."/>
            <person name="Cruveiller S."/>
            <person name="Dossat C."/>
            <person name="Duval S."/>
            <person name="Heymann M."/>
            <person name="Leize E."/>
            <person name="Lieutaud A."/>
            <person name="Lievremont D."/>
            <person name="Makita Y."/>
            <person name="Mangenot S."/>
            <person name="Nitschke W."/>
            <person name="Ortet P."/>
            <person name="Perdrial N."/>
            <person name="Schoepp B."/>
            <person name="Siguier P."/>
            <person name="Simeonova D.D."/>
            <person name="Rouy Z."/>
            <person name="Segurens B."/>
            <person name="Turlin E."/>
            <person name="Vallenet D."/>
            <person name="van Dorsselaer A."/>
            <person name="Weiss S."/>
            <person name="Weissenbach J."/>
            <person name="Lett M.-C."/>
            <person name="Danchin A."/>
            <person name="Bertin P.N."/>
        </authorList>
    </citation>
    <scope>NUCLEOTIDE SEQUENCE [LARGE SCALE GENOMIC DNA]</scope>
    <source>
        <strain>ULPAs1</strain>
    </source>
</reference>
<gene>
    <name evidence="1" type="primary">pdxH</name>
    <name type="ordered locus">HEAR2598</name>
</gene>
<evidence type="ECO:0000255" key="1">
    <source>
        <dbReference type="HAMAP-Rule" id="MF_01629"/>
    </source>
</evidence>
<feature type="chain" id="PRO_0000335786" description="Pyridoxine/pyridoxamine 5'-phosphate oxidase">
    <location>
        <begin position="1"/>
        <end position="211"/>
    </location>
</feature>
<feature type="binding site" evidence="1">
    <location>
        <begin position="7"/>
        <end position="10"/>
    </location>
    <ligand>
        <name>substrate</name>
    </ligand>
</feature>
<feature type="binding site" evidence="1">
    <location>
        <begin position="60"/>
        <end position="65"/>
    </location>
    <ligand>
        <name>FMN</name>
        <dbReference type="ChEBI" id="CHEBI:58210"/>
    </ligand>
</feature>
<feature type="binding site" evidence="1">
    <location>
        <position position="65"/>
    </location>
    <ligand>
        <name>substrate</name>
    </ligand>
</feature>
<feature type="binding site" evidence="1">
    <location>
        <begin position="75"/>
        <end position="76"/>
    </location>
    <ligand>
        <name>FMN</name>
        <dbReference type="ChEBI" id="CHEBI:58210"/>
    </ligand>
</feature>
<feature type="binding site" evidence="1">
    <location>
        <position position="81"/>
    </location>
    <ligand>
        <name>FMN</name>
        <dbReference type="ChEBI" id="CHEBI:58210"/>
    </ligand>
</feature>
<feature type="binding site" evidence="1">
    <location>
        <position position="82"/>
    </location>
    <ligand>
        <name>FMN</name>
        <dbReference type="ChEBI" id="CHEBI:58210"/>
    </ligand>
</feature>
<feature type="binding site" evidence="1">
    <location>
        <position position="122"/>
    </location>
    <ligand>
        <name>substrate</name>
    </ligand>
</feature>
<feature type="binding site" evidence="1">
    <location>
        <position position="126"/>
    </location>
    <ligand>
        <name>substrate</name>
    </ligand>
</feature>
<feature type="binding site" evidence="1">
    <location>
        <position position="130"/>
    </location>
    <ligand>
        <name>substrate</name>
    </ligand>
</feature>
<feature type="binding site" evidence="1">
    <location>
        <begin position="139"/>
        <end position="140"/>
    </location>
    <ligand>
        <name>FMN</name>
        <dbReference type="ChEBI" id="CHEBI:58210"/>
    </ligand>
</feature>
<feature type="binding site" evidence="1">
    <location>
        <position position="183"/>
    </location>
    <ligand>
        <name>FMN</name>
        <dbReference type="ChEBI" id="CHEBI:58210"/>
    </ligand>
</feature>
<feature type="binding site" evidence="1">
    <location>
        <begin position="189"/>
        <end position="191"/>
    </location>
    <ligand>
        <name>substrate</name>
    </ligand>
</feature>
<feature type="binding site" evidence="1">
    <location>
        <position position="193"/>
    </location>
    <ligand>
        <name>FMN</name>
        <dbReference type="ChEBI" id="CHEBI:58210"/>
    </ligand>
</feature>
<sequence length="211" mass="24210">MSIADIRTDYAQADLSETDTAADPVTQFAKWFDEALHAEVPEPNAMGVSTVGENGRPSSRIVLIKDFDQRGFTWFTNYDSRKGRELEKNPYAALLFHWIALEREVRIEGRVERVSAEESEQYFQSRPVKSRLSAIASAQSAPIADRAALEAQYAKVEAQHGDSTPRPPHWGGYRLQPEYVEFWQGRRSRLHDRIAYTLQKDGQWTRQRLQP</sequence>
<keyword id="KW-0285">Flavoprotein</keyword>
<keyword id="KW-0288">FMN</keyword>
<keyword id="KW-0560">Oxidoreductase</keyword>
<keyword id="KW-0664">Pyridoxine biosynthesis</keyword>
<keyword id="KW-1185">Reference proteome</keyword>